<name>LDHD_STRA5</name>
<gene>
    <name type="primary">ldhD</name>
    <name type="synonym">ldhA</name>
    <name type="ordered locus">SAG0695</name>
</gene>
<evidence type="ECO:0000250" key="1">
    <source>
        <dbReference type="UniProtKB" id="P26297"/>
    </source>
</evidence>
<evidence type="ECO:0000250" key="2">
    <source>
        <dbReference type="UniProtKB" id="P30901"/>
    </source>
</evidence>
<evidence type="ECO:0000305" key="3"/>
<proteinExistence type="inferred from homology"/>
<dbReference type="EC" id="1.1.1.28"/>
<dbReference type="EMBL" id="AE009948">
    <property type="protein sequence ID" value="AAM99582.1"/>
    <property type="molecule type" value="Genomic_DNA"/>
</dbReference>
<dbReference type="RefSeq" id="NP_687710.1">
    <property type="nucleotide sequence ID" value="NC_004116.1"/>
</dbReference>
<dbReference type="RefSeq" id="WP_000770070.1">
    <property type="nucleotide sequence ID" value="NC_004116.1"/>
</dbReference>
<dbReference type="SMR" id="Q8E0N5"/>
<dbReference type="STRING" id="208435.SAG0695"/>
<dbReference type="KEGG" id="sag:SAG0695"/>
<dbReference type="PATRIC" id="fig|208435.3.peg.701"/>
<dbReference type="HOGENOM" id="CLU_019796_1_1_9"/>
<dbReference type="OrthoDB" id="9805416at2"/>
<dbReference type="Proteomes" id="UP000000821">
    <property type="component" value="Chromosome"/>
</dbReference>
<dbReference type="GO" id="GO:0008720">
    <property type="term" value="F:D-lactate dehydrogenase activity"/>
    <property type="evidence" value="ECO:0007669"/>
    <property type="project" value="UniProtKB-EC"/>
</dbReference>
<dbReference type="GO" id="GO:0051287">
    <property type="term" value="F:NAD binding"/>
    <property type="evidence" value="ECO:0007669"/>
    <property type="project" value="InterPro"/>
</dbReference>
<dbReference type="CDD" id="cd12186">
    <property type="entry name" value="LDH"/>
    <property type="match status" value="1"/>
</dbReference>
<dbReference type="Gene3D" id="3.40.50.720">
    <property type="entry name" value="NAD(P)-binding Rossmann-like Domain"/>
    <property type="match status" value="2"/>
</dbReference>
<dbReference type="InterPro" id="IPR006139">
    <property type="entry name" value="D-isomer_2_OHA_DH_cat_dom"/>
</dbReference>
<dbReference type="InterPro" id="IPR029753">
    <property type="entry name" value="D-isomer_DH_CS"/>
</dbReference>
<dbReference type="InterPro" id="IPR029752">
    <property type="entry name" value="D-isomer_DH_CS1"/>
</dbReference>
<dbReference type="InterPro" id="IPR006140">
    <property type="entry name" value="D-isomer_DH_NAD-bd"/>
</dbReference>
<dbReference type="InterPro" id="IPR036291">
    <property type="entry name" value="NAD(P)-bd_dom_sf"/>
</dbReference>
<dbReference type="NCBIfam" id="NF006374">
    <property type="entry name" value="PRK08605.1"/>
    <property type="match status" value="1"/>
</dbReference>
<dbReference type="PANTHER" id="PTHR43026">
    <property type="entry name" value="2-HYDROXYACID DEHYDROGENASE HOMOLOG 1-RELATED"/>
    <property type="match status" value="1"/>
</dbReference>
<dbReference type="PANTHER" id="PTHR43026:SF1">
    <property type="entry name" value="2-HYDROXYACID DEHYDROGENASE HOMOLOG 1-RELATED"/>
    <property type="match status" value="1"/>
</dbReference>
<dbReference type="Pfam" id="PF00389">
    <property type="entry name" value="2-Hacid_dh"/>
    <property type="match status" value="1"/>
</dbReference>
<dbReference type="Pfam" id="PF02826">
    <property type="entry name" value="2-Hacid_dh_C"/>
    <property type="match status" value="1"/>
</dbReference>
<dbReference type="SUPFAM" id="SSF52283">
    <property type="entry name" value="Formate/glycerate dehydrogenase catalytic domain-like"/>
    <property type="match status" value="1"/>
</dbReference>
<dbReference type="SUPFAM" id="SSF51735">
    <property type="entry name" value="NAD(P)-binding Rossmann-fold domains"/>
    <property type="match status" value="1"/>
</dbReference>
<dbReference type="PROSITE" id="PS00065">
    <property type="entry name" value="D_2_HYDROXYACID_DH_1"/>
    <property type="match status" value="1"/>
</dbReference>
<dbReference type="PROSITE" id="PS00671">
    <property type="entry name" value="D_2_HYDROXYACID_DH_3"/>
    <property type="match status" value="1"/>
</dbReference>
<feature type="chain" id="PRO_0000075969" description="D-lactate dehydrogenase">
    <location>
        <begin position="1"/>
        <end position="330"/>
    </location>
</feature>
<feature type="active site" evidence="1">
    <location>
        <position position="235"/>
    </location>
</feature>
<feature type="active site" evidence="1">
    <location>
        <position position="264"/>
    </location>
</feature>
<feature type="active site" description="Proton donor" evidence="1">
    <location>
        <position position="296"/>
    </location>
</feature>
<feature type="binding site" evidence="2">
    <location>
        <begin position="155"/>
        <end position="156"/>
    </location>
    <ligand>
        <name>NAD(+)</name>
        <dbReference type="ChEBI" id="CHEBI:57540"/>
    </ligand>
</feature>
<feature type="binding site" evidence="1">
    <location>
        <position position="175"/>
    </location>
    <ligand>
        <name>NAD(+)</name>
        <dbReference type="ChEBI" id="CHEBI:57540"/>
    </ligand>
</feature>
<feature type="binding site" evidence="2">
    <location>
        <begin position="206"/>
        <end position="207"/>
    </location>
    <ligand>
        <name>NAD(+)</name>
        <dbReference type="ChEBI" id="CHEBI:57540"/>
    </ligand>
</feature>
<feature type="binding site" evidence="2">
    <location>
        <position position="212"/>
    </location>
    <ligand>
        <name>NAD(+)</name>
        <dbReference type="ChEBI" id="CHEBI:57540"/>
    </ligand>
</feature>
<feature type="binding site" evidence="2">
    <location>
        <begin position="233"/>
        <end position="235"/>
    </location>
    <ligand>
        <name>NAD(+)</name>
        <dbReference type="ChEBI" id="CHEBI:57540"/>
    </ligand>
</feature>
<feature type="binding site" evidence="2">
    <location>
        <position position="259"/>
    </location>
    <ligand>
        <name>NAD(+)</name>
        <dbReference type="ChEBI" id="CHEBI:57540"/>
    </ligand>
</feature>
<accession>Q8E0N5</accession>
<comment type="catalytic activity">
    <reaction>
        <text>(R)-lactate + NAD(+) = pyruvate + NADH + H(+)</text>
        <dbReference type="Rhea" id="RHEA:16369"/>
        <dbReference type="ChEBI" id="CHEBI:15361"/>
        <dbReference type="ChEBI" id="CHEBI:15378"/>
        <dbReference type="ChEBI" id="CHEBI:16004"/>
        <dbReference type="ChEBI" id="CHEBI:57540"/>
        <dbReference type="ChEBI" id="CHEBI:57945"/>
        <dbReference type="EC" id="1.1.1.28"/>
    </reaction>
</comment>
<comment type="similarity">
    <text evidence="3">Belongs to the D-isomer specific 2-hydroxyacid dehydrogenase family.</text>
</comment>
<reference key="1">
    <citation type="journal article" date="2002" name="Proc. Natl. Acad. Sci. U.S.A.">
        <title>Complete genome sequence and comparative genomic analysis of an emerging human pathogen, serotype V Streptococcus agalactiae.</title>
        <authorList>
            <person name="Tettelin H."/>
            <person name="Masignani V."/>
            <person name="Cieslewicz M.J."/>
            <person name="Eisen J.A."/>
            <person name="Peterson S.N."/>
            <person name="Wessels M.R."/>
            <person name="Paulsen I.T."/>
            <person name="Nelson K.E."/>
            <person name="Margarit I."/>
            <person name="Read T.D."/>
            <person name="Madoff L.C."/>
            <person name="Wolf A.M."/>
            <person name="Beanan M.J."/>
            <person name="Brinkac L.M."/>
            <person name="Daugherty S.C."/>
            <person name="DeBoy R.T."/>
            <person name="Durkin A.S."/>
            <person name="Kolonay J.F."/>
            <person name="Madupu R."/>
            <person name="Lewis M.R."/>
            <person name="Radune D."/>
            <person name="Fedorova N.B."/>
            <person name="Scanlan D."/>
            <person name="Khouri H.M."/>
            <person name="Mulligan S."/>
            <person name="Carty H.A."/>
            <person name="Cline R.T."/>
            <person name="Van Aken S.E."/>
            <person name="Gill J."/>
            <person name="Scarselli M."/>
            <person name="Mora M."/>
            <person name="Iacobini E.T."/>
            <person name="Brettoni C."/>
            <person name="Galli G."/>
            <person name="Mariani M."/>
            <person name="Vegni F."/>
            <person name="Maione D."/>
            <person name="Rinaudo D."/>
            <person name="Rappuoli R."/>
            <person name="Telford J.L."/>
            <person name="Kasper D.L."/>
            <person name="Grandi G."/>
            <person name="Fraser C.M."/>
        </authorList>
    </citation>
    <scope>NUCLEOTIDE SEQUENCE [LARGE SCALE GENOMIC DNA]</scope>
    <source>
        <strain>ATCC BAA-611 / 2603 V/R</strain>
    </source>
</reference>
<sequence>MKLKVFNVREEEATLAQDWANRNHVELSMSEGPLTLETVNEVEGFDGIANAQIEPLDDAIYPLLKEMGIKQIAQRSAGVDMYNLELAKQHGIIISNVPSYSPESIAEFTVTIALNLIRKVELIRANVREQNFSWTLPIRGRVLGNMTVAIIGTGRIGLATAKIFKGFGCRVIGYDIYHNPMADGILEYVNSVEEAVEEADLVSLHMPPTAENTHLFNLDMFKQFKKGAILMNMARGALVETKDLLEALDQGLLEGAGIDTYEFEGPYIPKNCQGQDISDKDFLRLINHPKVIYTPHAAYYTDEAVKNLVEGALNACVEVIETGTTTTKVN</sequence>
<organism>
    <name type="scientific">Streptococcus agalactiae serotype V (strain ATCC BAA-611 / 2603 V/R)</name>
    <dbReference type="NCBI Taxonomy" id="208435"/>
    <lineage>
        <taxon>Bacteria</taxon>
        <taxon>Bacillati</taxon>
        <taxon>Bacillota</taxon>
        <taxon>Bacilli</taxon>
        <taxon>Lactobacillales</taxon>
        <taxon>Streptococcaceae</taxon>
        <taxon>Streptococcus</taxon>
    </lineage>
</organism>
<protein>
    <recommendedName>
        <fullName>D-lactate dehydrogenase</fullName>
        <shortName>D-LDH</shortName>
        <ecNumber>1.1.1.28</ecNumber>
    </recommendedName>
    <alternativeName>
        <fullName>D-specific 2-hydroxyacid dehydrogenase</fullName>
    </alternativeName>
</protein>
<keyword id="KW-0520">NAD</keyword>
<keyword id="KW-0560">Oxidoreductase</keyword>
<keyword id="KW-1185">Reference proteome</keyword>